<dbReference type="EC" id="4.2.1.33" evidence="1"/>
<dbReference type="EMBL" id="Z75208">
    <property type="protein sequence ID" value="CAA99533.1"/>
    <property type="molecule type" value="Genomic_DNA"/>
</dbReference>
<dbReference type="EMBL" id="AL009126">
    <property type="protein sequence ID" value="CAB14786.1"/>
    <property type="molecule type" value="Genomic_DNA"/>
</dbReference>
<dbReference type="PIR" id="B69650">
    <property type="entry name" value="B69650"/>
</dbReference>
<dbReference type="RefSeq" id="NP_390704.1">
    <property type="nucleotide sequence ID" value="NC_000964.3"/>
</dbReference>
<dbReference type="RefSeq" id="WP_003229604.1">
    <property type="nucleotide sequence ID" value="NZ_OZ025638.1"/>
</dbReference>
<dbReference type="SMR" id="P80858"/>
<dbReference type="FunCoup" id="P80858">
    <property type="interactions" value="636"/>
</dbReference>
<dbReference type="IntAct" id="P80858">
    <property type="interactions" value="1"/>
</dbReference>
<dbReference type="MINT" id="P80858"/>
<dbReference type="STRING" id="224308.BSU28260"/>
<dbReference type="PaxDb" id="224308-BSU28260"/>
<dbReference type="DNASU" id="937478"/>
<dbReference type="EnsemblBacteria" id="CAB14786">
    <property type="protein sequence ID" value="CAB14786"/>
    <property type="gene ID" value="BSU_28260"/>
</dbReference>
<dbReference type="GeneID" id="937478"/>
<dbReference type="KEGG" id="bsu:BSU28260"/>
<dbReference type="PATRIC" id="fig|224308.179.peg.3070"/>
<dbReference type="eggNOG" id="COG0065">
    <property type="taxonomic scope" value="Bacteria"/>
</dbReference>
<dbReference type="InParanoid" id="P80858"/>
<dbReference type="OrthoDB" id="9802769at2"/>
<dbReference type="PhylomeDB" id="P80858"/>
<dbReference type="BioCyc" id="BSUB:BSU28260-MONOMER"/>
<dbReference type="UniPathway" id="UPA00048">
    <property type="reaction ID" value="UER00071"/>
</dbReference>
<dbReference type="Proteomes" id="UP000001570">
    <property type="component" value="Chromosome"/>
</dbReference>
<dbReference type="GO" id="GO:0003861">
    <property type="term" value="F:3-isopropylmalate dehydratase activity"/>
    <property type="evidence" value="ECO:0007669"/>
    <property type="project" value="UniProtKB-UniRule"/>
</dbReference>
<dbReference type="GO" id="GO:0051539">
    <property type="term" value="F:4 iron, 4 sulfur cluster binding"/>
    <property type="evidence" value="ECO:0007669"/>
    <property type="project" value="UniProtKB-KW"/>
</dbReference>
<dbReference type="GO" id="GO:0046872">
    <property type="term" value="F:metal ion binding"/>
    <property type="evidence" value="ECO:0007669"/>
    <property type="project" value="UniProtKB-KW"/>
</dbReference>
<dbReference type="GO" id="GO:0009098">
    <property type="term" value="P:L-leucine biosynthetic process"/>
    <property type="evidence" value="ECO:0007669"/>
    <property type="project" value="UniProtKB-UniRule"/>
</dbReference>
<dbReference type="CDD" id="cd01583">
    <property type="entry name" value="IPMI"/>
    <property type="match status" value="1"/>
</dbReference>
<dbReference type="FunFam" id="3.30.499.10:FF:000007">
    <property type="entry name" value="3-isopropylmalate dehydratase large subunit"/>
    <property type="match status" value="1"/>
</dbReference>
<dbReference type="Gene3D" id="3.30.499.10">
    <property type="entry name" value="Aconitase, domain 3"/>
    <property type="match status" value="2"/>
</dbReference>
<dbReference type="HAMAP" id="MF_01026">
    <property type="entry name" value="LeuC_type1"/>
    <property type="match status" value="1"/>
</dbReference>
<dbReference type="InterPro" id="IPR004430">
    <property type="entry name" value="3-IsopropMal_deHydase_lsu"/>
</dbReference>
<dbReference type="InterPro" id="IPR015931">
    <property type="entry name" value="Acnase/IPM_dHydase_lsu_aba_1/3"/>
</dbReference>
<dbReference type="InterPro" id="IPR001030">
    <property type="entry name" value="Acoase/IPM_deHydtase_lsu_aba"/>
</dbReference>
<dbReference type="InterPro" id="IPR018136">
    <property type="entry name" value="Aconitase_4Fe-4S_BS"/>
</dbReference>
<dbReference type="InterPro" id="IPR036008">
    <property type="entry name" value="Aconitase_4Fe-4S_dom"/>
</dbReference>
<dbReference type="InterPro" id="IPR050067">
    <property type="entry name" value="IPM_dehydratase_rel_enz"/>
</dbReference>
<dbReference type="InterPro" id="IPR033941">
    <property type="entry name" value="IPMI_cat"/>
</dbReference>
<dbReference type="NCBIfam" id="TIGR00170">
    <property type="entry name" value="leuC"/>
    <property type="match status" value="1"/>
</dbReference>
<dbReference type="NCBIfam" id="NF004016">
    <property type="entry name" value="PRK05478.1"/>
    <property type="match status" value="1"/>
</dbReference>
<dbReference type="NCBIfam" id="NF009116">
    <property type="entry name" value="PRK12466.1"/>
    <property type="match status" value="1"/>
</dbReference>
<dbReference type="PANTHER" id="PTHR43822:SF9">
    <property type="entry name" value="3-ISOPROPYLMALATE DEHYDRATASE"/>
    <property type="match status" value="1"/>
</dbReference>
<dbReference type="PANTHER" id="PTHR43822">
    <property type="entry name" value="HOMOACONITASE, MITOCHONDRIAL-RELATED"/>
    <property type="match status" value="1"/>
</dbReference>
<dbReference type="Pfam" id="PF00330">
    <property type="entry name" value="Aconitase"/>
    <property type="match status" value="1"/>
</dbReference>
<dbReference type="PRINTS" id="PR00415">
    <property type="entry name" value="ACONITASE"/>
</dbReference>
<dbReference type="SUPFAM" id="SSF53732">
    <property type="entry name" value="Aconitase iron-sulfur domain"/>
    <property type="match status" value="1"/>
</dbReference>
<dbReference type="PROSITE" id="PS00450">
    <property type="entry name" value="ACONITASE_1"/>
    <property type="match status" value="1"/>
</dbReference>
<evidence type="ECO:0000255" key="1">
    <source>
        <dbReference type="HAMAP-Rule" id="MF_01026"/>
    </source>
</evidence>
<evidence type="ECO:0000305" key="2"/>
<comment type="function">
    <text>Catalyzes the isomerization between 2-isopropylmalate and 3-isopropylmalate, via the formation of 2-isopropylmaleate.</text>
</comment>
<comment type="catalytic activity">
    <reaction evidence="1">
        <text>(2R,3S)-3-isopropylmalate = (2S)-2-isopropylmalate</text>
        <dbReference type="Rhea" id="RHEA:32287"/>
        <dbReference type="ChEBI" id="CHEBI:1178"/>
        <dbReference type="ChEBI" id="CHEBI:35121"/>
        <dbReference type="EC" id="4.2.1.33"/>
    </reaction>
</comment>
<comment type="cofactor">
    <cofactor evidence="1">
        <name>[4Fe-4S] cluster</name>
        <dbReference type="ChEBI" id="CHEBI:49883"/>
    </cofactor>
    <text evidence="1">Binds 1 [4Fe-4S] cluster per subunit.</text>
</comment>
<comment type="pathway">
    <text evidence="1">Amino-acid biosynthesis; L-leucine biosynthesis; L-leucine from 3-methyl-2-oxobutanoate: step 2/4.</text>
</comment>
<comment type="subunit">
    <text evidence="1">Heterodimer of LeuC and LeuD.</text>
</comment>
<comment type="induction">
    <text>By superoxide.</text>
</comment>
<comment type="similarity">
    <text evidence="1">Belongs to the aconitase/IPM isomerase family. LeuC type 1 subfamily.</text>
</comment>
<gene>
    <name evidence="1" type="primary">leuC</name>
    <name type="ordered locus">BSU28260</name>
</gene>
<keyword id="KW-0004">4Fe-4S</keyword>
<keyword id="KW-0028">Amino-acid biosynthesis</keyword>
<keyword id="KW-0100">Branched-chain amino acid biosynthesis</keyword>
<keyword id="KW-0903">Direct protein sequencing</keyword>
<keyword id="KW-0408">Iron</keyword>
<keyword id="KW-0411">Iron-sulfur</keyword>
<keyword id="KW-0432">Leucine biosynthesis</keyword>
<keyword id="KW-0456">Lyase</keyword>
<keyword id="KW-0479">Metal-binding</keyword>
<keyword id="KW-1185">Reference proteome</keyword>
<reference key="1">
    <citation type="journal article" date="1996" name="Microbiology">
        <title>The dnaB-pheA (256 degrees-240 degrees) region of the Bacillus subtilis chromosome containing genes responsible for stress responses, the utilization of plant cell walls and primary metabolism.</title>
        <authorList>
            <person name="Wipat A."/>
            <person name="Carter N."/>
            <person name="Brignell C.S."/>
            <person name="Guy J.B."/>
            <person name="Piper K."/>
            <person name="Sanders J."/>
            <person name="Emmerson P.T."/>
            <person name="Harwood C.R."/>
        </authorList>
    </citation>
    <scope>NUCLEOTIDE SEQUENCE [GENOMIC DNA]</scope>
    <source>
        <strain>168</strain>
    </source>
</reference>
<reference key="2">
    <citation type="journal article" date="1997" name="Nature">
        <title>The complete genome sequence of the Gram-positive bacterium Bacillus subtilis.</title>
        <authorList>
            <person name="Kunst F."/>
            <person name="Ogasawara N."/>
            <person name="Moszer I."/>
            <person name="Albertini A.M."/>
            <person name="Alloni G."/>
            <person name="Azevedo V."/>
            <person name="Bertero M.G."/>
            <person name="Bessieres P."/>
            <person name="Bolotin A."/>
            <person name="Borchert S."/>
            <person name="Borriss R."/>
            <person name="Boursier L."/>
            <person name="Brans A."/>
            <person name="Braun M."/>
            <person name="Brignell S.C."/>
            <person name="Bron S."/>
            <person name="Brouillet S."/>
            <person name="Bruschi C.V."/>
            <person name="Caldwell B."/>
            <person name="Capuano V."/>
            <person name="Carter N.M."/>
            <person name="Choi S.-K."/>
            <person name="Codani J.-J."/>
            <person name="Connerton I.F."/>
            <person name="Cummings N.J."/>
            <person name="Daniel R.A."/>
            <person name="Denizot F."/>
            <person name="Devine K.M."/>
            <person name="Duesterhoeft A."/>
            <person name="Ehrlich S.D."/>
            <person name="Emmerson P.T."/>
            <person name="Entian K.-D."/>
            <person name="Errington J."/>
            <person name="Fabret C."/>
            <person name="Ferrari E."/>
            <person name="Foulger D."/>
            <person name="Fritz C."/>
            <person name="Fujita M."/>
            <person name="Fujita Y."/>
            <person name="Fuma S."/>
            <person name="Galizzi A."/>
            <person name="Galleron N."/>
            <person name="Ghim S.-Y."/>
            <person name="Glaser P."/>
            <person name="Goffeau A."/>
            <person name="Golightly E.J."/>
            <person name="Grandi G."/>
            <person name="Guiseppi G."/>
            <person name="Guy B.J."/>
            <person name="Haga K."/>
            <person name="Haiech J."/>
            <person name="Harwood C.R."/>
            <person name="Henaut A."/>
            <person name="Hilbert H."/>
            <person name="Holsappel S."/>
            <person name="Hosono S."/>
            <person name="Hullo M.-F."/>
            <person name="Itaya M."/>
            <person name="Jones L.-M."/>
            <person name="Joris B."/>
            <person name="Karamata D."/>
            <person name="Kasahara Y."/>
            <person name="Klaerr-Blanchard M."/>
            <person name="Klein C."/>
            <person name="Kobayashi Y."/>
            <person name="Koetter P."/>
            <person name="Koningstein G."/>
            <person name="Krogh S."/>
            <person name="Kumano M."/>
            <person name="Kurita K."/>
            <person name="Lapidus A."/>
            <person name="Lardinois S."/>
            <person name="Lauber J."/>
            <person name="Lazarevic V."/>
            <person name="Lee S.-M."/>
            <person name="Levine A."/>
            <person name="Liu H."/>
            <person name="Masuda S."/>
            <person name="Mauel C."/>
            <person name="Medigue C."/>
            <person name="Medina N."/>
            <person name="Mellado R.P."/>
            <person name="Mizuno M."/>
            <person name="Moestl D."/>
            <person name="Nakai S."/>
            <person name="Noback M."/>
            <person name="Noone D."/>
            <person name="O'Reilly M."/>
            <person name="Ogawa K."/>
            <person name="Ogiwara A."/>
            <person name="Oudega B."/>
            <person name="Park S.-H."/>
            <person name="Parro V."/>
            <person name="Pohl T.M."/>
            <person name="Portetelle D."/>
            <person name="Porwollik S."/>
            <person name="Prescott A.M."/>
            <person name="Presecan E."/>
            <person name="Pujic P."/>
            <person name="Purnelle B."/>
            <person name="Rapoport G."/>
            <person name="Rey M."/>
            <person name="Reynolds S."/>
            <person name="Rieger M."/>
            <person name="Rivolta C."/>
            <person name="Rocha E."/>
            <person name="Roche B."/>
            <person name="Rose M."/>
            <person name="Sadaie Y."/>
            <person name="Sato T."/>
            <person name="Scanlan E."/>
            <person name="Schleich S."/>
            <person name="Schroeter R."/>
            <person name="Scoffone F."/>
            <person name="Sekiguchi J."/>
            <person name="Sekowska A."/>
            <person name="Seror S.J."/>
            <person name="Serror P."/>
            <person name="Shin B.-S."/>
            <person name="Soldo B."/>
            <person name="Sorokin A."/>
            <person name="Tacconi E."/>
            <person name="Takagi T."/>
            <person name="Takahashi H."/>
            <person name="Takemaru K."/>
            <person name="Takeuchi M."/>
            <person name="Tamakoshi A."/>
            <person name="Tanaka T."/>
            <person name="Terpstra P."/>
            <person name="Tognoni A."/>
            <person name="Tosato V."/>
            <person name="Uchiyama S."/>
            <person name="Vandenbol M."/>
            <person name="Vannier F."/>
            <person name="Vassarotti A."/>
            <person name="Viari A."/>
            <person name="Wambutt R."/>
            <person name="Wedler E."/>
            <person name="Wedler H."/>
            <person name="Weitzenegger T."/>
            <person name="Winters P."/>
            <person name="Wipat A."/>
            <person name="Yamamoto H."/>
            <person name="Yamane K."/>
            <person name="Yasumoto K."/>
            <person name="Yata K."/>
            <person name="Yoshida K."/>
            <person name="Yoshikawa H.-F."/>
            <person name="Zumstein E."/>
            <person name="Yoshikawa H."/>
            <person name="Danchin A."/>
        </authorList>
    </citation>
    <scope>NUCLEOTIDE SEQUENCE [LARGE SCALE GENOMIC DNA]</scope>
    <source>
        <strain>168</strain>
    </source>
</reference>
<reference key="3">
    <citation type="journal article" date="1997" name="Electrophoresis">
        <title>First steps from a two-dimensional protein index towards a response-regulation map for Bacillus subtilis.</title>
        <authorList>
            <person name="Antelmann H."/>
            <person name="Bernhardt J."/>
            <person name="Schmid R."/>
            <person name="Mach H."/>
            <person name="Voelker U."/>
            <person name="Hecker M."/>
        </authorList>
    </citation>
    <scope>PROTEIN SEQUENCE OF 1-29</scope>
    <source>
        <strain>168 / IS58</strain>
    </source>
</reference>
<sequence length="472" mass="52392">MMPRTIIEKIWDQHIVKHGEGKPDLLYIDLHLIHEVTSPQAFEGLRQKGRKVRRPQNTFATMDHNIPTVNRFEIKDEVAKRQVTALERNCEEFGVRLADLHSVDQGIVHVVGPELGLTLPGKTIVCGDSHTSTHGAFGALAFGIGTSEVEHVLSTQTLWQQRPKTLEVRVDGTLQKGVTAKDVILAVIGKYGVKFGTGYVIEYTGEVFRNMTMDERMTVCNMSIEAGARAGLIAPDEVTFEYCKNRKYTPKGEEFDKAVEEWKALRTDPGAVYDKSIVLDGNKISPMVTWGINPGMVLPVDSEVPAPESFSAEDDKKEAIRAYEYMGLTPHQKIEDIKVEHVFIGSCTNSRMTDLRQAADMIKGKKVADSVRAIVVPGSQSVKLQAEKEGLDQIFLEAGFEWRESGCSMCLSMNNDVVPEGERCASTSNRNFEGRQGKGARTHLVSPAMAAMAAIHGHFVDVRKFYQEKTVV</sequence>
<proteinExistence type="evidence at protein level"/>
<accession>P80858</accession>
<accession>P94567</accession>
<name>LEUC_BACSU</name>
<feature type="chain" id="PRO_0000076700" description="3-isopropylmalate dehydratase large subunit">
    <location>
        <begin position="1"/>
        <end position="472"/>
    </location>
</feature>
<feature type="binding site" evidence="1">
    <location>
        <position position="347"/>
    </location>
    <ligand>
        <name>[4Fe-4S] cluster</name>
        <dbReference type="ChEBI" id="CHEBI:49883"/>
    </ligand>
</feature>
<feature type="binding site" evidence="1">
    <location>
        <position position="407"/>
    </location>
    <ligand>
        <name>[4Fe-4S] cluster</name>
        <dbReference type="ChEBI" id="CHEBI:49883"/>
    </ligand>
</feature>
<feature type="binding site" evidence="1">
    <location>
        <position position="410"/>
    </location>
    <ligand>
        <name>[4Fe-4S] cluster</name>
        <dbReference type="ChEBI" id="CHEBI:49883"/>
    </ligand>
</feature>
<feature type="sequence conflict" description="In Ref. 3; AA sequence." evidence="2" ref="3">
    <original>W</original>
    <variation>L</variation>
    <location>
        <position position="11"/>
    </location>
</feature>
<feature type="sequence conflict" description="In Ref. 3; AA sequence." evidence="2" ref="3">
    <original>Y</original>
    <variation>T</variation>
    <location>
        <position position="27"/>
    </location>
</feature>
<organism>
    <name type="scientific">Bacillus subtilis (strain 168)</name>
    <dbReference type="NCBI Taxonomy" id="224308"/>
    <lineage>
        <taxon>Bacteria</taxon>
        <taxon>Bacillati</taxon>
        <taxon>Bacillota</taxon>
        <taxon>Bacilli</taxon>
        <taxon>Bacillales</taxon>
        <taxon>Bacillaceae</taxon>
        <taxon>Bacillus</taxon>
    </lineage>
</organism>
<protein>
    <recommendedName>
        <fullName evidence="1">3-isopropylmalate dehydratase large subunit</fullName>
        <ecNumber evidence="1">4.2.1.33</ecNumber>
    </recommendedName>
    <alternativeName>
        <fullName evidence="1">Alpha-IPM isomerase</fullName>
        <shortName evidence="1">IPMI</shortName>
    </alternativeName>
    <alternativeName>
        <fullName evidence="1">Isopropylmalate isomerase</fullName>
    </alternativeName>
    <alternativeName>
        <fullName>Superoxide-inducible protein 10</fullName>
        <shortName>SOI10</shortName>
    </alternativeName>
</protein>